<dbReference type="EMBL" id="CR626927">
    <property type="protein sequence ID" value="CAH06002.1"/>
    <property type="molecule type" value="Genomic_DNA"/>
</dbReference>
<dbReference type="RefSeq" id="WP_005779329.1">
    <property type="nucleotide sequence ID" value="NZ_UFTH01000001.1"/>
</dbReference>
<dbReference type="SMR" id="Q5LIM4"/>
<dbReference type="PaxDb" id="272559-BF9343_0223"/>
<dbReference type="KEGG" id="bfs:BF9343_0223"/>
<dbReference type="eggNOG" id="COG0393">
    <property type="taxonomic scope" value="Bacteria"/>
</dbReference>
<dbReference type="HOGENOM" id="CLU_117144_3_2_10"/>
<dbReference type="Proteomes" id="UP000006731">
    <property type="component" value="Chromosome"/>
</dbReference>
<dbReference type="Gene3D" id="3.30.110.70">
    <property type="entry name" value="Hypothetical protein apc22750. Chain B"/>
    <property type="match status" value="1"/>
</dbReference>
<dbReference type="HAMAP" id="MF_00338">
    <property type="entry name" value="UPF0145"/>
    <property type="match status" value="1"/>
</dbReference>
<dbReference type="InterPro" id="IPR035439">
    <property type="entry name" value="UPF0145_dom_sf"/>
</dbReference>
<dbReference type="InterPro" id="IPR002765">
    <property type="entry name" value="UPF0145_YbjQ-like"/>
</dbReference>
<dbReference type="NCBIfam" id="NF002776">
    <property type="entry name" value="PRK02877.1"/>
    <property type="match status" value="1"/>
</dbReference>
<dbReference type="PANTHER" id="PTHR34068">
    <property type="entry name" value="UPF0145 PROTEIN YBJQ"/>
    <property type="match status" value="1"/>
</dbReference>
<dbReference type="PANTHER" id="PTHR34068:SF1">
    <property type="entry name" value="UPF0145 PROTEIN YBJQ"/>
    <property type="match status" value="1"/>
</dbReference>
<dbReference type="Pfam" id="PF01906">
    <property type="entry name" value="YbjQ_1"/>
    <property type="match status" value="1"/>
</dbReference>
<dbReference type="SUPFAM" id="SSF117782">
    <property type="entry name" value="YbjQ-like"/>
    <property type="match status" value="1"/>
</dbReference>
<proteinExistence type="inferred from homology"/>
<gene>
    <name type="ordered locus">BF0226</name>
</gene>
<accession>Q5LIM4</accession>
<name>Y226_BACFN</name>
<comment type="similarity">
    <text evidence="1">Belongs to the UPF0145 family.</text>
</comment>
<organism>
    <name type="scientific">Bacteroides fragilis (strain ATCC 25285 / DSM 2151 / CCUG 4856 / JCM 11019 / LMG 10263 / NCTC 9343 / Onslow / VPI 2553 / EN-2)</name>
    <dbReference type="NCBI Taxonomy" id="272559"/>
    <lineage>
        <taxon>Bacteria</taxon>
        <taxon>Pseudomonadati</taxon>
        <taxon>Bacteroidota</taxon>
        <taxon>Bacteroidia</taxon>
        <taxon>Bacteroidales</taxon>
        <taxon>Bacteroidaceae</taxon>
        <taxon>Bacteroides</taxon>
    </lineage>
</organism>
<feature type="chain" id="PRO_0000225814" description="UPF0145 protein BF0226">
    <location>
        <begin position="1"/>
        <end position="106"/>
    </location>
</feature>
<evidence type="ECO:0000255" key="1">
    <source>
        <dbReference type="HAMAP-Rule" id="MF_00338"/>
    </source>
</evidence>
<sequence>MLLATTPIIEGKRITTYYGIVSGETIIGANVFRDFFASIRDIVGGRSGSYEEVLREAKDTALKEMSEQARQMGANAVIGVDLDYETVGGSGSMLMVTASGTAVFLE</sequence>
<reference key="1">
    <citation type="journal article" date="2005" name="Science">
        <title>Extensive DNA inversions in the B. fragilis genome control variable gene expression.</title>
        <authorList>
            <person name="Cerdeno-Tarraga A.-M."/>
            <person name="Patrick S."/>
            <person name="Crossman L.C."/>
            <person name="Blakely G."/>
            <person name="Abratt V."/>
            <person name="Lennard N."/>
            <person name="Poxton I."/>
            <person name="Duerden B."/>
            <person name="Harris B."/>
            <person name="Quail M.A."/>
            <person name="Barron A."/>
            <person name="Clark L."/>
            <person name="Corton C."/>
            <person name="Doggett J."/>
            <person name="Holden M.T.G."/>
            <person name="Larke N."/>
            <person name="Line A."/>
            <person name="Lord A."/>
            <person name="Norbertczak H."/>
            <person name="Ormond D."/>
            <person name="Price C."/>
            <person name="Rabbinowitsch E."/>
            <person name="Woodward J."/>
            <person name="Barrell B.G."/>
            <person name="Parkhill J."/>
        </authorList>
    </citation>
    <scope>NUCLEOTIDE SEQUENCE [LARGE SCALE GENOMIC DNA]</scope>
    <source>
        <strain>ATCC 25285 / DSM 2151 / CCUG 4856 / JCM 11019 / LMG 10263 / NCTC 9343 / Onslow / VPI 2553 / EN-2</strain>
    </source>
</reference>
<protein>
    <recommendedName>
        <fullName evidence="1">UPF0145 protein BF0226</fullName>
    </recommendedName>
</protein>